<sequence length="158" mass="17492">MEAERPQEDGEQSLPQDDQGWPPVNSTARPWRSAPPSPPPPGTRHTALGPRSGSLLSLQTELLLDLVAEAQSRRLEEQRAAFHTPKVPPSLAPTPPRLLEDKEQLYSTILSHQCQRIEAQRSDPPLPPGGQELLELLLRVQGGGRMEDQRSRPPTHTC</sequence>
<accession>Q6MG88</accession>
<feature type="chain" id="PRO_0000233719" description="G-protein-signaling modulator 3">
    <location>
        <begin position="1"/>
        <end position="158"/>
    </location>
</feature>
<feature type="domain" description="GoLoco 1" evidence="4">
    <location>
        <begin position="60"/>
        <end position="82"/>
    </location>
</feature>
<feature type="domain" description="GoLoco 2" evidence="4">
    <location>
        <begin position="102"/>
        <end position="124"/>
    </location>
</feature>
<feature type="domain" description="GoLoco 3" evidence="4">
    <location>
        <begin position="130"/>
        <end position="153"/>
    </location>
</feature>
<feature type="region of interest" description="Disordered" evidence="5">
    <location>
        <begin position="1"/>
        <end position="53"/>
    </location>
</feature>
<feature type="region of interest" description="Disordered" evidence="5">
    <location>
        <begin position="78"/>
        <end position="97"/>
    </location>
</feature>
<feature type="compositionally biased region" description="Pro residues" evidence="5">
    <location>
        <begin position="33"/>
        <end position="42"/>
    </location>
</feature>
<feature type="compositionally biased region" description="Low complexity" evidence="5">
    <location>
        <begin position="43"/>
        <end position="53"/>
    </location>
</feature>
<feature type="compositionally biased region" description="Pro residues" evidence="5">
    <location>
        <begin position="86"/>
        <end position="96"/>
    </location>
</feature>
<feature type="modified residue" description="Phosphoserine" evidence="3">
    <location>
        <position position="33"/>
    </location>
</feature>
<feature type="modified residue" description="Phosphoserine" evidence="3">
    <location>
        <position position="37"/>
    </location>
</feature>
<feature type="modified residue" description="Phosphoserine" evidence="2">
    <location>
        <position position="54"/>
    </location>
</feature>
<feature type="modified residue" description="Phosphoserine" evidence="3">
    <location>
        <position position="57"/>
    </location>
</feature>
<feature type="modified residue" description="Phosphothreonine" evidence="3">
    <location>
        <position position="60"/>
    </location>
</feature>
<name>GPSM3_RAT</name>
<reference key="1">
    <citation type="journal article" date="2004" name="Genome Res.">
        <title>The genomic sequence and comparative analysis of the rat major histocompatibility complex.</title>
        <authorList>
            <person name="Hurt P."/>
            <person name="Walter L."/>
            <person name="Sudbrak R."/>
            <person name="Klages S."/>
            <person name="Mueller I."/>
            <person name="Shiina T."/>
            <person name="Inoko H."/>
            <person name="Lehrach H."/>
            <person name="Guenther E."/>
            <person name="Reinhardt R."/>
            <person name="Himmelbauer H."/>
        </authorList>
    </citation>
    <scope>NUCLEOTIDE SEQUENCE [LARGE SCALE GENOMIC DNA]</scope>
    <source>
        <strain>Brown Norway</strain>
    </source>
</reference>
<reference key="2">
    <citation type="journal article" date="2004" name="Genome Res.">
        <title>The status, quality, and expansion of the NIH full-length cDNA project: the Mammalian Gene Collection (MGC).</title>
        <authorList>
            <consortium name="The MGC Project Team"/>
        </authorList>
    </citation>
    <scope>NUCLEOTIDE SEQUENCE [LARGE SCALE MRNA]</scope>
    <source>
        <tissue>Thymus</tissue>
    </source>
</reference>
<reference key="3">
    <citation type="journal article" date="2012" name="Nat. Commun.">
        <title>Quantitative maps of protein phosphorylation sites across 14 different rat organs and tissues.</title>
        <authorList>
            <person name="Lundby A."/>
            <person name="Secher A."/>
            <person name="Lage K."/>
            <person name="Nordsborg N.B."/>
            <person name="Dmytriyev A."/>
            <person name="Lundby C."/>
            <person name="Olsen J.V."/>
        </authorList>
    </citation>
    <scope>IDENTIFICATION BY MASS SPECTROMETRY [LARGE SCALE ANALYSIS]</scope>
</reference>
<organism>
    <name type="scientific">Rattus norvegicus</name>
    <name type="common">Rat</name>
    <dbReference type="NCBI Taxonomy" id="10116"/>
    <lineage>
        <taxon>Eukaryota</taxon>
        <taxon>Metazoa</taxon>
        <taxon>Chordata</taxon>
        <taxon>Craniata</taxon>
        <taxon>Vertebrata</taxon>
        <taxon>Euteleostomi</taxon>
        <taxon>Mammalia</taxon>
        <taxon>Eutheria</taxon>
        <taxon>Euarchontoglires</taxon>
        <taxon>Glires</taxon>
        <taxon>Rodentia</taxon>
        <taxon>Myomorpha</taxon>
        <taxon>Muroidea</taxon>
        <taxon>Muridae</taxon>
        <taxon>Murinae</taxon>
        <taxon>Rattus</taxon>
    </lineage>
</organism>
<gene>
    <name type="primary">Gpsm3</name>
</gene>
<comment type="function">
    <text evidence="1">Interacts with subunit of G(i) alpha proteins and regulates the activation of G(i) alpha proteins.</text>
</comment>
<comment type="subcellular location">
    <subcellularLocation>
        <location evidence="1">Cytoplasm</location>
    </subcellularLocation>
</comment>
<comment type="domain">
    <text evidence="1">The GoLoco 1 and/or GoLoco 3 domains exhibit GDI activity towards GDP-bound G(i) alpha protein, but not the GoLoco 2 domain.</text>
</comment>
<dbReference type="EMBL" id="BX883044">
    <property type="protein sequence ID" value="CAE83958.1"/>
    <property type="molecule type" value="Genomic_DNA"/>
</dbReference>
<dbReference type="EMBL" id="BC088220">
    <property type="protein sequence ID" value="AAH88220.1"/>
    <property type="molecule type" value="mRNA"/>
</dbReference>
<dbReference type="RefSeq" id="NP_001003974.1">
    <property type="nucleotide sequence ID" value="NM_001003974.2"/>
</dbReference>
<dbReference type="FunCoup" id="Q6MG88">
    <property type="interactions" value="442"/>
</dbReference>
<dbReference type="STRING" id="10116.ENSRNOP00000000510"/>
<dbReference type="GlyGen" id="Q6MG88">
    <property type="glycosylation" value="1 site"/>
</dbReference>
<dbReference type="iPTMnet" id="Q6MG88"/>
<dbReference type="PhosphoSitePlus" id="Q6MG88"/>
<dbReference type="PaxDb" id="10116-ENSRNOP00000000510"/>
<dbReference type="Ensembl" id="ENSRNOT00000000510.6">
    <property type="protein sequence ID" value="ENSRNOP00000000510.4"/>
    <property type="gene ID" value="ENSRNOG00000000441.7"/>
</dbReference>
<dbReference type="GeneID" id="406163"/>
<dbReference type="KEGG" id="rno:406163"/>
<dbReference type="UCSC" id="RGD:1303014">
    <property type="organism name" value="rat"/>
</dbReference>
<dbReference type="AGR" id="RGD:1303014"/>
<dbReference type="CTD" id="63940"/>
<dbReference type="RGD" id="1303014">
    <property type="gene designation" value="Gpsm3"/>
</dbReference>
<dbReference type="eggNOG" id="ENOG502STIS">
    <property type="taxonomic scope" value="Eukaryota"/>
</dbReference>
<dbReference type="GeneTree" id="ENSGT00390000002471"/>
<dbReference type="HOGENOM" id="CLU_139851_0_0_1"/>
<dbReference type="InParanoid" id="Q6MG88"/>
<dbReference type="OMA" id="HQSQRME"/>
<dbReference type="OrthoDB" id="90248at9989"/>
<dbReference type="PhylomeDB" id="Q6MG88"/>
<dbReference type="TreeFam" id="TF339136"/>
<dbReference type="Reactome" id="R-RNO-418594">
    <property type="pathway name" value="G alpha (i) signalling events"/>
</dbReference>
<dbReference type="PRO" id="PR:Q6MG88"/>
<dbReference type="Proteomes" id="UP000002494">
    <property type="component" value="Chromosome 20"/>
</dbReference>
<dbReference type="Bgee" id="ENSRNOG00000000441">
    <property type="expression patterns" value="Expressed in thymus and 18 other cell types or tissues"/>
</dbReference>
<dbReference type="GO" id="GO:0005737">
    <property type="term" value="C:cytoplasm"/>
    <property type="evidence" value="ECO:0007669"/>
    <property type="project" value="UniProtKB-SubCell"/>
</dbReference>
<dbReference type="GO" id="GO:0005886">
    <property type="term" value="C:plasma membrane"/>
    <property type="evidence" value="ECO:0000266"/>
    <property type="project" value="RGD"/>
</dbReference>
<dbReference type="GO" id="GO:0030695">
    <property type="term" value="F:GTPase regulator activity"/>
    <property type="evidence" value="ECO:0007669"/>
    <property type="project" value="InterPro"/>
</dbReference>
<dbReference type="GO" id="GO:0006955">
    <property type="term" value="P:immune response"/>
    <property type="evidence" value="ECO:0000304"/>
    <property type="project" value="RGD"/>
</dbReference>
<dbReference type="GO" id="GO:1900017">
    <property type="term" value="P:positive regulation of cytokine production involved in inflammatory response"/>
    <property type="evidence" value="ECO:0000266"/>
    <property type="project" value="RGD"/>
</dbReference>
<dbReference type="GO" id="GO:0050729">
    <property type="term" value="P:positive regulation of inflammatory response"/>
    <property type="evidence" value="ECO:0000266"/>
    <property type="project" value="RGD"/>
</dbReference>
<dbReference type="GO" id="GO:0002690">
    <property type="term" value="P:positive regulation of leukocyte chemotaxis"/>
    <property type="evidence" value="ECO:0000266"/>
    <property type="project" value="RGD"/>
</dbReference>
<dbReference type="FunFam" id="1.25.40.10:FF:000241">
    <property type="entry name" value="G-protein-signaling modulator 3 isoform X1"/>
    <property type="match status" value="1"/>
</dbReference>
<dbReference type="Gene3D" id="1.25.40.10">
    <property type="entry name" value="Tetratricopeptide repeat domain"/>
    <property type="match status" value="1"/>
</dbReference>
<dbReference type="InterPro" id="IPR003109">
    <property type="entry name" value="GoLoco_motif"/>
</dbReference>
<dbReference type="InterPro" id="IPR042888">
    <property type="entry name" value="GPSM3"/>
</dbReference>
<dbReference type="InterPro" id="IPR011990">
    <property type="entry name" value="TPR-like_helical_dom_sf"/>
</dbReference>
<dbReference type="PANTHER" id="PTHR47617">
    <property type="entry name" value="G-PROTEIN SIGNALING MODULATOR 3"/>
    <property type="match status" value="1"/>
</dbReference>
<dbReference type="PANTHER" id="PTHR47617:SF1">
    <property type="entry name" value="G-PROTEIN-SIGNALING MODULATOR 3"/>
    <property type="match status" value="1"/>
</dbReference>
<dbReference type="Pfam" id="PF02188">
    <property type="entry name" value="GoLoco"/>
    <property type="match status" value="1"/>
</dbReference>
<dbReference type="SMART" id="SM00390">
    <property type="entry name" value="GoLoco"/>
    <property type="match status" value="3"/>
</dbReference>
<dbReference type="PROSITE" id="PS50877">
    <property type="entry name" value="GOLOCO"/>
    <property type="match status" value="2"/>
</dbReference>
<proteinExistence type="evidence at protein level"/>
<evidence type="ECO:0000250" key="1"/>
<evidence type="ECO:0000250" key="2">
    <source>
        <dbReference type="UniProtKB" id="Q3U1Z5"/>
    </source>
</evidence>
<evidence type="ECO:0000250" key="3">
    <source>
        <dbReference type="UniProtKB" id="Q9Y4H4"/>
    </source>
</evidence>
<evidence type="ECO:0000255" key="4">
    <source>
        <dbReference type="PROSITE-ProRule" id="PRU00097"/>
    </source>
</evidence>
<evidence type="ECO:0000256" key="5">
    <source>
        <dbReference type="SAM" id="MobiDB-lite"/>
    </source>
</evidence>
<keyword id="KW-0963">Cytoplasm</keyword>
<keyword id="KW-0597">Phosphoprotein</keyword>
<keyword id="KW-1185">Reference proteome</keyword>
<keyword id="KW-0677">Repeat</keyword>
<protein>
    <recommendedName>
        <fullName>G-protein-signaling modulator 3</fullName>
    </recommendedName>
</protein>